<accession>B5F7G0</accession>
<keyword id="KW-0687">Ribonucleoprotein</keyword>
<keyword id="KW-0689">Ribosomal protein</keyword>
<reference key="1">
    <citation type="journal article" date="2011" name="J. Bacteriol.">
        <title>Comparative genomics of 28 Salmonella enterica isolates: evidence for CRISPR-mediated adaptive sublineage evolution.</title>
        <authorList>
            <person name="Fricke W.F."/>
            <person name="Mammel M.K."/>
            <person name="McDermott P.F."/>
            <person name="Tartera C."/>
            <person name="White D.G."/>
            <person name="Leclerc J.E."/>
            <person name="Ravel J."/>
            <person name="Cebula T.A."/>
        </authorList>
    </citation>
    <scope>NUCLEOTIDE SEQUENCE [LARGE SCALE GENOMIC DNA]</scope>
    <source>
        <strain>SL483</strain>
    </source>
</reference>
<protein>
    <recommendedName>
        <fullName evidence="1">Large ribosomal subunit protein bL35</fullName>
    </recommendedName>
    <alternativeName>
        <fullName evidence="3">50S ribosomal protein L35</fullName>
    </alternativeName>
</protein>
<evidence type="ECO:0000255" key="1">
    <source>
        <dbReference type="HAMAP-Rule" id="MF_00514"/>
    </source>
</evidence>
<evidence type="ECO:0000256" key="2">
    <source>
        <dbReference type="SAM" id="MobiDB-lite"/>
    </source>
</evidence>
<evidence type="ECO:0000305" key="3"/>
<organism>
    <name type="scientific">Salmonella agona (strain SL483)</name>
    <dbReference type="NCBI Taxonomy" id="454166"/>
    <lineage>
        <taxon>Bacteria</taxon>
        <taxon>Pseudomonadati</taxon>
        <taxon>Pseudomonadota</taxon>
        <taxon>Gammaproteobacteria</taxon>
        <taxon>Enterobacterales</taxon>
        <taxon>Enterobacteriaceae</taxon>
        <taxon>Salmonella</taxon>
    </lineage>
</organism>
<sequence length="65" mass="7289">MPKIKTVRGAAKRFKKTGKGGFKHKHANLRHILTKKATKRKRHLRPKAMVSKGDLGLVIACLPYA</sequence>
<dbReference type="EMBL" id="CP001138">
    <property type="protein sequence ID" value="ACH51102.1"/>
    <property type="molecule type" value="Genomic_DNA"/>
</dbReference>
<dbReference type="RefSeq" id="WP_001124225.1">
    <property type="nucleotide sequence ID" value="NC_011149.1"/>
</dbReference>
<dbReference type="SMR" id="B5F7G0"/>
<dbReference type="GeneID" id="97601348"/>
<dbReference type="KEGG" id="sea:SeAg_B1838"/>
<dbReference type="HOGENOM" id="CLU_169643_1_1_6"/>
<dbReference type="Proteomes" id="UP000008819">
    <property type="component" value="Chromosome"/>
</dbReference>
<dbReference type="GO" id="GO:0022625">
    <property type="term" value="C:cytosolic large ribosomal subunit"/>
    <property type="evidence" value="ECO:0007669"/>
    <property type="project" value="TreeGrafter"/>
</dbReference>
<dbReference type="GO" id="GO:0003735">
    <property type="term" value="F:structural constituent of ribosome"/>
    <property type="evidence" value="ECO:0007669"/>
    <property type="project" value="InterPro"/>
</dbReference>
<dbReference type="GO" id="GO:0006412">
    <property type="term" value="P:translation"/>
    <property type="evidence" value="ECO:0007669"/>
    <property type="project" value="UniProtKB-UniRule"/>
</dbReference>
<dbReference type="FunFam" id="4.10.410.60:FF:000001">
    <property type="entry name" value="50S ribosomal protein L35"/>
    <property type="match status" value="1"/>
</dbReference>
<dbReference type="Gene3D" id="4.10.410.60">
    <property type="match status" value="1"/>
</dbReference>
<dbReference type="HAMAP" id="MF_00514">
    <property type="entry name" value="Ribosomal_bL35"/>
    <property type="match status" value="1"/>
</dbReference>
<dbReference type="InterPro" id="IPR001706">
    <property type="entry name" value="Ribosomal_bL35"/>
</dbReference>
<dbReference type="InterPro" id="IPR021137">
    <property type="entry name" value="Ribosomal_bL35-like"/>
</dbReference>
<dbReference type="InterPro" id="IPR018265">
    <property type="entry name" value="Ribosomal_bL35_CS"/>
</dbReference>
<dbReference type="InterPro" id="IPR037229">
    <property type="entry name" value="Ribosomal_bL35_sf"/>
</dbReference>
<dbReference type="NCBIfam" id="TIGR00001">
    <property type="entry name" value="rpmI_bact"/>
    <property type="match status" value="1"/>
</dbReference>
<dbReference type="PANTHER" id="PTHR33343">
    <property type="entry name" value="54S RIBOSOMAL PROTEIN BL35M"/>
    <property type="match status" value="1"/>
</dbReference>
<dbReference type="PANTHER" id="PTHR33343:SF1">
    <property type="entry name" value="LARGE RIBOSOMAL SUBUNIT PROTEIN BL35M"/>
    <property type="match status" value="1"/>
</dbReference>
<dbReference type="Pfam" id="PF01632">
    <property type="entry name" value="Ribosomal_L35p"/>
    <property type="match status" value="1"/>
</dbReference>
<dbReference type="PRINTS" id="PR00064">
    <property type="entry name" value="RIBOSOMALL35"/>
</dbReference>
<dbReference type="SUPFAM" id="SSF143034">
    <property type="entry name" value="L35p-like"/>
    <property type="match status" value="1"/>
</dbReference>
<dbReference type="PROSITE" id="PS00936">
    <property type="entry name" value="RIBOSOMAL_L35"/>
    <property type="match status" value="1"/>
</dbReference>
<name>RL35_SALA4</name>
<comment type="similarity">
    <text evidence="1">Belongs to the bacterial ribosomal protein bL35 family.</text>
</comment>
<gene>
    <name evidence="1" type="primary">rpmI</name>
    <name type="ordered locus">SeAg_B1838</name>
</gene>
<proteinExistence type="inferred from homology"/>
<feature type="chain" id="PRO_1000127401" description="Large ribosomal subunit protein bL35">
    <location>
        <begin position="1"/>
        <end position="65"/>
    </location>
</feature>
<feature type="region of interest" description="Disordered" evidence="2">
    <location>
        <begin position="1"/>
        <end position="22"/>
    </location>
</feature>
<feature type="compositionally biased region" description="Basic residues" evidence="2">
    <location>
        <begin position="10"/>
        <end position="22"/>
    </location>
</feature>